<comment type="function">
    <text evidence="3 4">Vacuolar cation/proton exchanger (CAX). Translocates Ca(2+) and other metal ions into vacuoles using the proton gradient formed by H(+)-ATPase and H(+)-pyrophosphatase.</text>
</comment>
<comment type="biophysicochemical properties">
    <kinetics>
        <KM evidence="3">9.5 uM for Ca(2+) (at pH 7.2 and 22 degrees Celsius)</KM>
        <Vmax evidence="3">3.8 nmol/min/mg enzyme with Ca(2+) as ion</Vmax>
        <text>Measured in vacuolar yeast membrane vesicles.</text>
    </kinetics>
</comment>
<comment type="subcellular location">
    <subcellularLocation>
        <location evidence="7">Vacuole membrane</location>
        <topology evidence="7">Multi-pass membrane protein</topology>
    </subcellularLocation>
    <text>Tonoplast.</text>
</comment>
<comment type="alternative products">
    <event type="alternative splicing"/>
    <isoform>
        <id>Q769E5-1</id>
        <name>1</name>
        <sequence type="displayed"/>
    </isoform>
    <isoform>
        <id>Q769E5-2</id>
        <name>2</name>
        <sequence type="described" ref="VSP_015366 VSP_015367 VSP_015368"/>
    </isoform>
</comment>
<comment type="tissue specificity">
    <text evidence="4">Ubiquitous.</text>
</comment>
<comment type="similarity">
    <text evidence="6">Belongs to the Ca(2+):cation antiporter (CaCA) (TC 2.A.19) family. Cation/proton exchanger (CAX) subfamily.</text>
</comment>
<dbReference type="EMBL" id="AB112656">
    <property type="protein sequence ID" value="BAD06218.1"/>
    <property type="molecule type" value="mRNA"/>
</dbReference>
<dbReference type="EMBL" id="AF489111">
    <property type="protein sequence ID" value="AAM03123.1"/>
    <property type="molecule type" value="mRNA"/>
</dbReference>
<dbReference type="EMBL" id="AP003372">
    <property type="protein sequence ID" value="BAD87498.1"/>
    <property type="molecule type" value="Genomic_DNA"/>
</dbReference>
<dbReference type="EMBL" id="AP003443">
    <property type="protein sequence ID" value="BAD87649.1"/>
    <property type="molecule type" value="Genomic_DNA"/>
</dbReference>
<dbReference type="EMBL" id="AP008207">
    <property type="protein sequence ID" value="BAF05245.1"/>
    <property type="molecule type" value="Genomic_DNA"/>
</dbReference>
<dbReference type="EMBL" id="AP014957">
    <property type="protein sequence ID" value="BAS72688.1"/>
    <property type="molecule type" value="Genomic_DNA"/>
</dbReference>
<dbReference type="RefSeq" id="XP_015620208.1">
    <property type="nucleotide sequence ID" value="XM_015764722.1"/>
</dbReference>
<dbReference type="SMR" id="Q769E5"/>
<dbReference type="FunCoup" id="Q769E5">
    <property type="interactions" value="50"/>
</dbReference>
<dbReference type="STRING" id="39947.Q769E5"/>
<dbReference type="TCDB" id="2.A.19.2.10">
    <property type="family name" value="the ca(2+):cation antiporter (caca) family"/>
</dbReference>
<dbReference type="PaxDb" id="39947-Q769E5"/>
<dbReference type="EnsemblPlants" id="Os01t0557500-01">
    <molecule id="Q769E5-1"/>
    <property type="protein sequence ID" value="Os01t0557500-01"/>
    <property type="gene ID" value="Os01g0557500"/>
</dbReference>
<dbReference type="Gramene" id="Os01t0557500-01">
    <molecule id="Q769E5-1"/>
    <property type="protein sequence ID" value="Os01t0557500-01"/>
    <property type="gene ID" value="Os01g0557500"/>
</dbReference>
<dbReference type="KEGG" id="dosa:Os01g0557500"/>
<dbReference type="eggNOG" id="KOG1397">
    <property type="taxonomic scope" value="Eukaryota"/>
</dbReference>
<dbReference type="HOGENOM" id="CLU_008721_2_0_1"/>
<dbReference type="InParanoid" id="Q769E5"/>
<dbReference type="OMA" id="IAAQCFR"/>
<dbReference type="OrthoDB" id="1699231at2759"/>
<dbReference type="Proteomes" id="UP000000763">
    <property type="component" value="Chromosome 1"/>
</dbReference>
<dbReference type="Proteomes" id="UP000059680">
    <property type="component" value="Chromosome 1"/>
</dbReference>
<dbReference type="GO" id="GO:0009705">
    <property type="term" value="C:plant-type vacuole membrane"/>
    <property type="evidence" value="ECO:0000318"/>
    <property type="project" value="GO_Central"/>
</dbReference>
<dbReference type="GO" id="GO:0015369">
    <property type="term" value="F:calcium:proton antiporter activity"/>
    <property type="evidence" value="ECO:0000318"/>
    <property type="project" value="GO_Central"/>
</dbReference>
<dbReference type="GO" id="GO:0070588">
    <property type="term" value="P:calcium ion transmembrane transport"/>
    <property type="evidence" value="ECO:0000318"/>
    <property type="project" value="GO_Central"/>
</dbReference>
<dbReference type="GO" id="GO:0006874">
    <property type="term" value="P:intracellular calcium ion homeostasis"/>
    <property type="evidence" value="ECO:0000318"/>
    <property type="project" value="GO_Central"/>
</dbReference>
<dbReference type="FunFam" id="1.20.1420.30:FF:000008">
    <property type="entry name" value="Vacuolar cation/proton exchanger"/>
    <property type="match status" value="1"/>
</dbReference>
<dbReference type="Gene3D" id="1.20.1420.30">
    <property type="entry name" value="NCX, central ion-binding region"/>
    <property type="match status" value="1"/>
</dbReference>
<dbReference type="InterPro" id="IPR004713">
    <property type="entry name" value="CaH_exchang"/>
</dbReference>
<dbReference type="InterPro" id="IPR004798">
    <property type="entry name" value="CAX-like"/>
</dbReference>
<dbReference type="InterPro" id="IPR004837">
    <property type="entry name" value="NaCa_Exmemb"/>
</dbReference>
<dbReference type="InterPro" id="IPR044880">
    <property type="entry name" value="NCX_ion-bd_dom_sf"/>
</dbReference>
<dbReference type="NCBIfam" id="TIGR00846">
    <property type="entry name" value="caca2"/>
    <property type="match status" value="1"/>
</dbReference>
<dbReference type="NCBIfam" id="TIGR00378">
    <property type="entry name" value="cax"/>
    <property type="match status" value="1"/>
</dbReference>
<dbReference type="PANTHER" id="PTHR31503">
    <property type="entry name" value="VACUOLAR CALCIUM ION TRANSPORTER"/>
    <property type="match status" value="1"/>
</dbReference>
<dbReference type="PANTHER" id="PTHR31503:SF1">
    <property type="entry name" value="VACUOLAR CATION_PROTON EXCHANGER 3"/>
    <property type="match status" value="1"/>
</dbReference>
<dbReference type="Pfam" id="PF01699">
    <property type="entry name" value="Na_Ca_ex"/>
    <property type="match status" value="2"/>
</dbReference>
<name>CAX1A_ORYSJ</name>
<protein>
    <recommendedName>
        <fullName>Vacuolar cation/proton exchanger 1a</fullName>
    </recommendedName>
    <alternativeName>
        <fullName>Ca(2+)/H(+) exchanger 1a</fullName>
    </alternativeName>
    <alternativeName>
        <fullName>OsCAX1a</fullName>
    </alternativeName>
</protein>
<keyword id="KW-0025">Alternative splicing</keyword>
<keyword id="KW-0050">Antiport</keyword>
<keyword id="KW-0106">Calcium</keyword>
<keyword id="KW-0109">Calcium transport</keyword>
<keyword id="KW-0406">Ion transport</keyword>
<keyword id="KW-0472">Membrane</keyword>
<keyword id="KW-1185">Reference proteome</keyword>
<keyword id="KW-0812">Transmembrane</keyword>
<keyword id="KW-1133">Transmembrane helix</keyword>
<keyword id="KW-0813">Transport</keyword>
<keyword id="KW-0926">Vacuole</keyword>
<reference key="1">
    <citation type="journal article" date="2004" name="J. Biol. Chem.">
        <title>Residues in internal repeats of the rice cation/H+ exchanger are involved in the transport and selection of cations.</title>
        <authorList>
            <person name="Kamiya T."/>
            <person name="Maeshima M."/>
        </authorList>
    </citation>
    <scope>NUCLEOTIDE SEQUENCE [MRNA] (ISOFORM 1)</scope>
    <scope>FUNCTION</scope>
    <scope>ACTIVITY REGULATION</scope>
    <scope>BIOPHYSICOCHEMICAL PROPERTIES</scope>
    <scope>SUBCELLULAR LOCATION</scope>
    <scope>DOMAIN</scope>
    <scope>MUTAGENESIS OF GLY-128; ASN-129; GLU-132; LYS-144; LYS-149; GLY-154; ASN-326; GLU-329; HIS-330; LYS-341; GLY-351; SER-352 AND GLN-355</scope>
    <source>
        <strain>cv. Nipponbare</strain>
    </source>
</reference>
<reference key="2">
    <citation type="submission" date="2002-02" db="EMBL/GenBank/DDBJ databases">
        <authorList>
            <person name="Shen G.M."/>
            <person name="Wang X.C."/>
        </authorList>
    </citation>
    <scope>NUCLEOTIDE SEQUENCE [MRNA] (ISOFORM 2)</scope>
</reference>
<reference key="3">
    <citation type="journal article" date="2002" name="Nature">
        <title>The genome sequence and structure of rice chromosome 1.</title>
        <authorList>
            <person name="Sasaki T."/>
            <person name="Matsumoto T."/>
            <person name="Yamamoto K."/>
            <person name="Sakata K."/>
            <person name="Baba T."/>
            <person name="Katayose Y."/>
            <person name="Wu J."/>
            <person name="Niimura Y."/>
            <person name="Cheng Z."/>
            <person name="Nagamura Y."/>
            <person name="Antonio B.A."/>
            <person name="Kanamori H."/>
            <person name="Hosokawa S."/>
            <person name="Masukawa M."/>
            <person name="Arikawa K."/>
            <person name="Chiden Y."/>
            <person name="Hayashi M."/>
            <person name="Okamoto M."/>
            <person name="Ando T."/>
            <person name="Aoki H."/>
            <person name="Arita K."/>
            <person name="Hamada M."/>
            <person name="Harada C."/>
            <person name="Hijishita S."/>
            <person name="Honda M."/>
            <person name="Ichikawa Y."/>
            <person name="Idonuma A."/>
            <person name="Iijima M."/>
            <person name="Ikeda M."/>
            <person name="Ikeno M."/>
            <person name="Ito S."/>
            <person name="Ito T."/>
            <person name="Ito Y."/>
            <person name="Ito Y."/>
            <person name="Iwabuchi A."/>
            <person name="Kamiya K."/>
            <person name="Karasawa W."/>
            <person name="Katagiri S."/>
            <person name="Kikuta A."/>
            <person name="Kobayashi N."/>
            <person name="Kono I."/>
            <person name="Machita K."/>
            <person name="Maehara T."/>
            <person name="Mizuno H."/>
            <person name="Mizubayashi T."/>
            <person name="Mukai Y."/>
            <person name="Nagasaki H."/>
            <person name="Nakashima M."/>
            <person name="Nakama Y."/>
            <person name="Nakamichi Y."/>
            <person name="Nakamura M."/>
            <person name="Namiki N."/>
            <person name="Negishi M."/>
            <person name="Ohta I."/>
            <person name="Ono N."/>
            <person name="Saji S."/>
            <person name="Sakai K."/>
            <person name="Shibata M."/>
            <person name="Shimokawa T."/>
            <person name="Shomura A."/>
            <person name="Song J."/>
            <person name="Takazaki Y."/>
            <person name="Terasawa K."/>
            <person name="Tsuji K."/>
            <person name="Waki K."/>
            <person name="Yamagata H."/>
            <person name="Yamane H."/>
            <person name="Yoshiki S."/>
            <person name="Yoshihara R."/>
            <person name="Yukawa K."/>
            <person name="Zhong H."/>
            <person name="Iwama H."/>
            <person name="Endo T."/>
            <person name="Ito H."/>
            <person name="Hahn J.H."/>
            <person name="Kim H.-I."/>
            <person name="Eun M.-Y."/>
            <person name="Yano M."/>
            <person name="Jiang J."/>
            <person name="Gojobori T."/>
        </authorList>
    </citation>
    <scope>NUCLEOTIDE SEQUENCE [LARGE SCALE GENOMIC DNA]</scope>
    <source>
        <strain>cv. Nipponbare</strain>
    </source>
</reference>
<reference key="4">
    <citation type="journal article" date="2005" name="Nature">
        <title>The map-based sequence of the rice genome.</title>
        <authorList>
            <consortium name="International rice genome sequencing project (IRGSP)"/>
        </authorList>
    </citation>
    <scope>NUCLEOTIDE SEQUENCE [LARGE SCALE GENOMIC DNA]</scope>
    <source>
        <strain>cv. Nipponbare</strain>
    </source>
</reference>
<reference key="5">
    <citation type="journal article" date="2008" name="Nucleic Acids Res.">
        <title>The rice annotation project database (RAP-DB): 2008 update.</title>
        <authorList>
            <consortium name="The rice annotation project (RAP)"/>
        </authorList>
    </citation>
    <scope>GENOME REANNOTATION</scope>
    <source>
        <strain>cv. Nipponbare</strain>
    </source>
</reference>
<reference key="6">
    <citation type="journal article" date="2013" name="Rice">
        <title>Improvement of the Oryza sativa Nipponbare reference genome using next generation sequence and optical map data.</title>
        <authorList>
            <person name="Kawahara Y."/>
            <person name="de la Bastide M."/>
            <person name="Hamilton J.P."/>
            <person name="Kanamori H."/>
            <person name="McCombie W.R."/>
            <person name="Ouyang S."/>
            <person name="Schwartz D.C."/>
            <person name="Tanaka T."/>
            <person name="Wu J."/>
            <person name="Zhou S."/>
            <person name="Childs K.L."/>
            <person name="Davidson R.M."/>
            <person name="Lin H."/>
            <person name="Quesada-Ocampo L."/>
            <person name="Vaillancourt B."/>
            <person name="Sakai H."/>
            <person name="Lee S.S."/>
            <person name="Kim J."/>
            <person name="Numa H."/>
            <person name="Itoh T."/>
            <person name="Buell C.R."/>
            <person name="Matsumoto T."/>
        </authorList>
    </citation>
    <scope>GENOME REANNOTATION</scope>
    <source>
        <strain>cv. Nipponbare</strain>
    </source>
</reference>
<reference key="7">
    <citation type="journal article" date="2005" name="Plant Cell Physiol.">
        <title>Expression profile of the genes for rice cation/h+ exchanger family and functional analysis in yeast.</title>
        <authorList>
            <person name="Kamiya T."/>
            <person name="Akahori T."/>
            <person name="Maeshima M."/>
        </authorList>
    </citation>
    <scope>FUNCTION</scope>
    <scope>TISSUE SPECIFICITY</scope>
</reference>
<organism>
    <name type="scientific">Oryza sativa subsp. japonica</name>
    <name type="common">Rice</name>
    <dbReference type="NCBI Taxonomy" id="39947"/>
    <lineage>
        <taxon>Eukaryota</taxon>
        <taxon>Viridiplantae</taxon>
        <taxon>Streptophyta</taxon>
        <taxon>Embryophyta</taxon>
        <taxon>Tracheophyta</taxon>
        <taxon>Spermatophyta</taxon>
        <taxon>Magnoliopsida</taxon>
        <taxon>Liliopsida</taxon>
        <taxon>Poales</taxon>
        <taxon>Poaceae</taxon>
        <taxon>BOP clade</taxon>
        <taxon>Oryzoideae</taxon>
        <taxon>Oryzeae</taxon>
        <taxon>Oryzinae</taxon>
        <taxon>Oryza</taxon>
        <taxon>Oryza sativa</taxon>
    </lineage>
</organism>
<accession>Q769E5</accession>
<accession>Q0JLY3</accession>
<accession>Q8S3C7</accession>
<gene>
    <name type="primary">CAX1a</name>
    <name type="ordered locus">Os01g0557500</name>
    <name type="ordered locus">LOC_Os01g37690</name>
    <name type="ORF">B1144D11.14</name>
    <name type="ORF">OJ1014_G12.40</name>
</gene>
<proteinExistence type="evidence at protein level"/>
<evidence type="ECO:0000255" key="1"/>
<evidence type="ECO:0000256" key="2">
    <source>
        <dbReference type="SAM" id="MobiDB-lite"/>
    </source>
</evidence>
<evidence type="ECO:0000269" key="3">
    <source>
    </source>
</evidence>
<evidence type="ECO:0000269" key="4">
    <source>
    </source>
</evidence>
<evidence type="ECO:0000303" key="5">
    <source ref="2"/>
</evidence>
<evidence type="ECO:0000305" key="6"/>
<evidence type="ECO:0000305" key="7">
    <source>
    </source>
</evidence>
<sequence>MEAAAAMEAGRKLAARHPHGRSRTAHNMSSSSLRKKSDAALVRKVPVAPLRPLLANLQEVFLATKLAVLFPAVPLAIAAQCFRFDQVWVFALSLLGLIPLAERVSFLTEQIALYTGPTVGGLLNATCGNATELIIALFALLKGKIEVVKCSLLGSVLSNLLLVLGTSLFCGGVVNLGARQPYDRNQSDVSTALLFLAVLCHSAPLLLRYAVAAGEHSVSATSAAASLDLSRACSFVMLASYVAYLFFQLKTHRQLFEPQEVDGGDAGDDDEEPALGFASALFWLALMTAVISVLSEYVVGTIEPTSQSWGLSVSFISIILLPIVGNAAEHAGAIIFALKNKLDITLGVALGSATQISMFVVPLSVLVAWIMGVQMDLDFKLLETGSLFMAVLVTAFTLQDGTSHYLKGILLLLCYIVIGACFFVARQPAGHANSNGALLDVPTGSMSVQAA</sequence>
<feature type="chain" id="PRO_0000209497" description="Vacuolar cation/proton exchanger 1a">
    <location>
        <begin position="1"/>
        <end position="451"/>
    </location>
</feature>
<feature type="topological domain" description="Cytoplasmic" evidence="1">
    <location>
        <begin position="1"/>
        <end position="58"/>
    </location>
</feature>
<feature type="transmembrane region" description="Helical" evidence="1">
    <location>
        <begin position="59"/>
        <end position="79"/>
    </location>
</feature>
<feature type="topological domain" description="Vacuolar" evidence="1">
    <location>
        <begin position="80"/>
        <end position="86"/>
    </location>
</feature>
<feature type="transmembrane region" description="Helical" evidence="1">
    <location>
        <begin position="87"/>
        <end position="107"/>
    </location>
</feature>
<feature type="topological domain" description="Cytoplasmic" evidence="1">
    <location>
        <begin position="108"/>
        <end position="120"/>
    </location>
</feature>
<feature type="transmembrane region" description="Helical" evidence="1">
    <location>
        <begin position="121"/>
        <end position="141"/>
    </location>
</feature>
<feature type="topological domain" description="Vacuolar" evidence="1">
    <location>
        <begin position="142"/>
        <end position="153"/>
    </location>
</feature>
<feature type="transmembrane region" description="Helical" evidence="1">
    <location>
        <begin position="154"/>
        <end position="174"/>
    </location>
</feature>
<feature type="topological domain" description="Cytoplasmic" evidence="1">
    <location>
        <begin position="175"/>
        <end position="191"/>
    </location>
</feature>
<feature type="transmembrane region" description="Helical" evidence="1">
    <location>
        <begin position="192"/>
        <end position="212"/>
    </location>
</feature>
<feature type="topological domain" description="Vacuolar" evidence="1">
    <location>
        <begin position="213"/>
        <end position="228"/>
    </location>
</feature>
<feature type="transmembrane region" description="Helical" evidence="1">
    <location>
        <begin position="229"/>
        <end position="249"/>
    </location>
</feature>
<feature type="topological domain" description="Cytoplasmic" evidence="1">
    <location>
        <begin position="250"/>
        <end position="273"/>
    </location>
</feature>
<feature type="transmembrane region" description="Helical" evidence="1">
    <location>
        <begin position="274"/>
        <end position="294"/>
    </location>
</feature>
<feature type="topological domain" description="Vacuolar" evidence="1">
    <location>
        <begin position="295"/>
        <end position="317"/>
    </location>
</feature>
<feature type="transmembrane region" description="Helical" evidence="1">
    <location>
        <begin position="318"/>
        <end position="338"/>
    </location>
</feature>
<feature type="topological domain" description="Cytoplasmic" evidence="1">
    <location>
        <begin position="339"/>
        <end position="352"/>
    </location>
</feature>
<feature type="transmembrane region" description="Helical" evidence="1">
    <location>
        <begin position="353"/>
        <end position="373"/>
    </location>
</feature>
<feature type="topological domain" description="Vacuolar" evidence="1">
    <location>
        <begin position="374"/>
        <end position="378"/>
    </location>
</feature>
<feature type="transmembrane region" description="Helical" evidence="1">
    <location>
        <begin position="379"/>
        <end position="399"/>
    </location>
</feature>
<feature type="topological domain" description="Cytoplasmic" evidence="1">
    <location>
        <begin position="400"/>
        <end position="404"/>
    </location>
</feature>
<feature type="transmembrane region" description="Helical" evidence="1">
    <location>
        <begin position="405"/>
        <end position="425"/>
    </location>
</feature>
<feature type="topological domain" description="Vacuolar" evidence="1">
    <location>
        <begin position="426"/>
        <end position="451"/>
    </location>
</feature>
<feature type="region of interest" description="Disordered" evidence="2">
    <location>
        <begin position="9"/>
        <end position="37"/>
    </location>
</feature>
<feature type="region of interest" description="Cation selection" evidence="1">
    <location>
        <begin position="128"/>
        <end position="163"/>
    </location>
</feature>
<feature type="region of interest" description="Cation selection" evidence="1">
    <location>
        <begin position="325"/>
        <end position="360"/>
    </location>
</feature>
<feature type="compositionally biased region" description="Basic residues" evidence="2">
    <location>
        <begin position="13"/>
        <end position="24"/>
    </location>
</feature>
<feature type="splice variant" id="VSP_015366" description="In isoform 2." evidence="5">
    <location>
        <begin position="1"/>
        <end position="110"/>
    </location>
</feature>
<feature type="splice variant" id="VSP_015367" description="In isoform 2." evidence="5">
    <original>IALYTGPT</original>
    <variation>MMVYAWGA</variation>
    <location>
        <begin position="111"/>
        <end position="118"/>
    </location>
</feature>
<feature type="splice variant" id="VSP_015368" description="In isoform 2." evidence="5">
    <original>GHANSNGALLDVPTGSMSVQAA</original>
    <variation>ASGTAVSLYVDYHIFVMISSIWCDRVANLSDSWNA</variation>
    <location>
        <begin position="430"/>
        <end position="451"/>
    </location>
</feature>
<feature type="mutagenesis site" description="Reduced transport of Ca(2+) and loss of transport of Mn(2+)." evidence="3">
    <original>G</original>
    <variation>A</variation>
    <location>
        <position position="128"/>
    </location>
</feature>
<feature type="mutagenesis site" description="Loss of transport of Ca(2+) and Mn(2+)." evidence="3">
    <original>N</original>
    <variation>A</variation>
    <location>
        <position position="129"/>
    </location>
</feature>
<feature type="mutagenesis site" description="Reduced transport of Ca(2+) and loss of transport of Mn(2+)." evidence="3">
    <original>E</original>
    <variation>D</variation>
    <location>
        <position position="132"/>
    </location>
</feature>
<feature type="mutagenesis site" description="Loss of transport of Ca(2+) and Mn(2+)." evidence="3">
    <original>E</original>
    <variation>Q</variation>
    <location>
        <position position="132"/>
    </location>
</feature>
<feature type="mutagenesis site" description="Reduced transport of Ca(2+) and Mn(2+)." evidence="3">
    <original>K</original>
    <variation>A</variation>
    <location>
        <position position="144"/>
    </location>
</feature>
<feature type="mutagenesis site" description="Reduced transport of Ca(2+) and Mn(2+)." evidence="3">
    <original>K</original>
    <variation>A</variation>
    <location>
        <position position="149"/>
    </location>
</feature>
<feature type="mutagenesis site" description="Loss of transport of Ca(2+) and Mn(2+)." evidence="3">
    <original>G</original>
    <variation>A</variation>
    <location>
        <position position="154"/>
    </location>
</feature>
<feature type="mutagenesis site" description="Reduced transport of Ca(2+) and loss of transport of Mn(2+)." evidence="3">
    <original>N</original>
    <variation>A</variation>
    <location>
        <position position="326"/>
    </location>
</feature>
<feature type="mutagenesis site" description="Loss of transport of Ca(2+) and Mn(2+)." evidence="3">
    <original>E</original>
    <variation>D</variation>
    <variation>Q</variation>
    <location>
        <position position="329"/>
    </location>
</feature>
<feature type="mutagenesis site" description="Loss of transport of Ca(2+) and Mn(2+)." evidence="3">
    <original>H</original>
    <variation>A</variation>
    <variation>R</variation>
    <location>
        <position position="330"/>
    </location>
</feature>
<feature type="mutagenesis site" description="Reduced transport of Ca(2+) and Mn(2+)." evidence="3">
    <original>K</original>
    <variation>A</variation>
    <location>
        <position position="341"/>
    </location>
</feature>
<feature type="mutagenesis site" description="Reduced transport of Ca(2+) and Mn(2+)." evidence="3">
    <original>G</original>
    <variation>A</variation>
    <location>
        <position position="351"/>
    </location>
</feature>
<feature type="mutagenesis site" description="Reduced transport of Ca(2+) and loss of transport of Mn(2+)." evidence="3">
    <original>S</original>
    <variation>A</variation>
    <location>
        <position position="352"/>
    </location>
</feature>
<feature type="mutagenesis site" description="Reduced transport of Ca(2+) and loss of transport of Mn(2+)." evidence="3">
    <original>Q</original>
    <variation>A</variation>
    <location>
        <position position="355"/>
    </location>
</feature>